<evidence type="ECO:0000250" key="1">
    <source>
        <dbReference type="UniProtKB" id="O74213"/>
    </source>
</evidence>
<evidence type="ECO:0000255" key="2"/>
<evidence type="ECO:0000255" key="3">
    <source>
        <dbReference type="PROSITE-ProRule" id="PRU00498"/>
    </source>
</evidence>
<evidence type="ECO:0000255" key="4">
    <source>
        <dbReference type="PROSITE-ProRule" id="PRU10052"/>
    </source>
</evidence>
<evidence type="ECO:0000305" key="5"/>
<comment type="catalytic activity">
    <reaction>
        <text>(1,4-alpha-D-galacturonosyl)n+m + H2O = (1,4-alpha-D-galacturonosyl)n + (1,4-alpha-D-galacturonosyl)m.</text>
        <dbReference type="EC" id="3.2.1.15"/>
    </reaction>
</comment>
<comment type="subcellular location">
    <subcellularLocation>
        <location>Secreted</location>
    </subcellularLocation>
</comment>
<comment type="similarity">
    <text evidence="5">Belongs to the glycosyl hydrolase 28 family.</text>
</comment>
<proteinExistence type="inferred from homology"/>
<feature type="signal peptide" evidence="2">
    <location>
        <begin position="1"/>
        <end position="20"/>
    </location>
</feature>
<feature type="propeptide" id="PRO_0000024793" evidence="2">
    <location>
        <begin position="21"/>
        <end position="38"/>
    </location>
</feature>
<feature type="chain" id="PRO_0000024794" description="Polygalacturonase 2">
    <location>
        <begin position="39"/>
        <end position="380"/>
    </location>
</feature>
<feature type="repeat" description="PbH1 1" evidence="2">
    <location>
        <begin position="173"/>
        <end position="204"/>
    </location>
</feature>
<feature type="repeat" description="PbH1 2" evidence="2">
    <location>
        <begin position="205"/>
        <end position="226"/>
    </location>
</feature>
<feature type="repeat" description="PbH1 3" evidence="2">
    <location>
        <begin position="256"/>
        <end position="277"/>
    </location>
</feature>
<feature type="repeat" description="PbH1 4" evidence="2">
    <location>
        <begin position="285"/>
        <end position="307"/>
    </location>
</feature>
<feature type="repeat" description="PbH1 5" evidence="2">
    <location>
        <begin position="319"/>
        <end position="364"/>
    </location>
</feature>
<feature type="active site" description="Proton donor" evidence="1">
    <location>
        <position position="219"/>
    </location>
</feature>
<feature type="active site" evidence="4">
    <location>
        <position position="241"/>
    </location>
</feature>
<feature type="glycosylation site" description="N-linked (GlcNAc...) asparagine" evidence="3">
    <location>
        <position position="287"/>
    </location>
</feature>
<feature type="disulfide bond" evidence="1">
    <location>
        <begin position="42"/>
        <end position="60"/>
    </location>
</feature>
<feature type="disulfide bond" evidence="1">
    <location>
        <begin position="221"/>
        <end position="237"/>
    </location>
</feature>
<feature type="disulfide bond" evidence="1">
    <location>
        <begin position="347"/>
        <end position="352"/>
    </location>
</feature>
<feature type="disulfide bond" evidence="1">
    <location>
        <begin position="371"/>
        <end position="380"/>
    </location>
</feature>
<gene>
    <name type="primary">PG2</name>
</gene>
<organism>
    <name type="scientific">Penicillium olsonii</name>
    <dbReference type="NCBI Taxonomy" id="99116"/>
    <lineage>
        <taxon>Eukaryota</taxon>
        <taxon>Fungi</taxon>
        <taxon>Dikarya</taxon>
        <taxon>Ascomycota</taxon>
        <taxon>Pezizomycotina</taxon>
        <taxon>Eurotiomycetes</taxon>
        <taxon>Eurotiomycetidae</taxon>
        <taxon>Eurotiales</taxon>
        <taxon>Aspergillaceae</taxon>
        <taxon>Penicillium</taxon>
    </lineage>
</organism>
<dbReference type="EC" id="3.2.1.15"/>
<dbReference type="EMBL" id="AJ243522">
    <property type="protein sequence ID" value="CAB46909.1"/>
    <property type="molecule type" value="Genomic_DNA"/>
</dbReference>
<dbReference type="SMR" id="Q9Y833"/>
<dbReference type="CAZy" id="GH28">
    <property type="family name" value="Glycoside Hydrolase Family 28"/>
</dbReference>
<dbReference type="GlyCosmos" id="Q9Y833">
    <property type="glycosylation" value="1 site, No reported glycans"/>
</dbReference>
<dbReference type="GO" id="GO:0005576">
    <property type="term" value="C:extracellular region"/>
    <property type="evidence" value="ECO:0007669"/>
    <property type="project" value="UniProtKB-SubCell"/>
</dbReference>
<dbReference type="GO" id="GO:0004650">
    <property type="term" value="F:polygalacturonase activity"/>
    <property type="evidence" value="ECO:0007669"/>
    <property type="project" value="UniProtKB-EC"/>
</dbReference>
<dbReference type="GO" id="GO:0071555">
    <property type="term" value="P:cell wall organization"/>
    <property type="evidence" value="ECO:0007669"/>
    <property type="project" value="UniProtKB-KW"/>
</dbReference>
<dbReference type="GO" id="GO:0045490">
    <property type="term" value="P:pectin catabolic process"/>
    <property type="evidence" value="ECO:0007669"/>
    <property type="project" value="TreeGrafter"/>
</dbReference>
<dbReference type="FunFam" id="2.160.20.10:FF:000002">
    <property type="entry name" value="Endopolygalacturonase D"/>
    <property type="match status" value="1"/>
</dbReference>
<dbReference type="Gene3D" id="2.160.20.10">
    <property type="entry name" value="Single-stranded right-handed beta-helix, Pectin lyase-like"/>
    <property type="match status" value="1"/>
</dbReference>
<dbReference type="InterPro" id="IPR000743">
    <property type="entry name" value="Glyco_hydro_28"/>
</dbReference>
<dbReference type="InterPro" id="IPR050434">
    <property type="entry name" value="Glycosyl_hydrlase_28"/>
</dbReference>
<dbReference type="InterPro" id="IPR006626">
    <property type="entry name" value="PbH1"/>
</dbReference>
<dbReference type="InterPro" id="IPR012334">
    <property type="entry name" value="Pectin_lyas_fold"/>
</dbReference>
<dbReference type="InterPro" id="IPR011050">
    <property type="entry name" value="Pectin_lyase_fold/virulence"/>
</dbReference>
<dbReference type="PANTHER" id="PTHR31884">
    <property type="entry name" value="POLYGALACTURONASE"/>
    <property type="match status" value="1"/>
</dbReference>
<dbReference type="PANTHER" id="PTHR31884:SF1">
    <property type="entry name" value="POLYGALACTURONASE"/>
    <property type="match status" value="1"/>
</dbReference>
<dbReference type="Pfam" id="PF00295">
    <property type="entry name" value="Glyco_hydro_28"/>
    <property type="match status" value="1"/>
</dbReference>
<dbReference type="SMART" id="SM00710">
    <property type="entry name" value="PbH1"/>
    <property type="match status" value="5"/>
</dbReference>
<dbReference type="SUPFAM" id="SSF51126">
    <property type="entry name" value="Pectin lyase-like"/>
    <property type="match status" value="1"/>
</dbReference>
<dbReference type="PROSITE" id="PS00502">
    <property type="entry name" value="POLYGALACTURONASE"/>
    <property type="match status" value="1"/>
</dbReference>
<keyword id="KW-0961">Cell wall biogenesis/degradation</keyword>
<keyword id="KW-1015">Disulfide bond</keyword>
<keyword id="KW-0325">Glycoprotein</keyword>
<keyword id="KW-0326">Glycosidase</keyword>
<keyword id="KW-0378">Hydrolase</keyword>
<keyword id="KW-0677">Repeat</keyword>
<keyword id="KW-0964">Secreted</keyword>
<keyword id="KW-0732">Signal</keyword>
<sequence length="380" mass="38653">MIAGSKLLMLGLFGALAVHALPEPAKAQVTAAPKLEERATSCTFSGSAGASSASKSKTACATIVLSAVAVPSGTTLDLTGLNDGTTVIFEGETTFGYKEWSGPLVSVSGTDITVKGASGATLNGDGSRWWDGKGSNGGKTKPKFFYAHKMFSSTISDIHIVNSPVQVFSINGATDLTLSGITVDNRDGDTDEGGHNTDAFDVGSSTGITITGATVYNQDDCLAVNSGTDITFTGGLCSGGHGLSIGSVGGRSNNDVANVIIENSQIQDSTNGVRIKTVYEATGSVKNVTYKDITLSGITKYGIVIEQDYENGSPTGTPTDGVPITDLTLDGVKGTVASSGTNVYILCAEGACSDWTWDGVSVSGGKTSSACENVPSSASC</sequence>
<name>PGLR2_PENOL</name>
<accession>Q9Y833</accession>
<reference key="1">
    <citation type="journal article" date="2000" name="FEMS Microbiol. Lett.">
        <title>Cloning and targeted disruption of two polygalacturonase genes in Penicillium olsonii.</title>
        <authorList>
            <person name="Wagner F."/>
            <person name="Kusserow H."/>
            <person name="Schaefer W."/>
        </authorList>
    </citation>
    <scope>NUCLEOTIDE SEQUENCE [GENOMIC DNA]</scope>
</reference>
<protein>
    <recommendedName>
        <fullName>Polygalacturonase 2</fullName>
        <shortName>PG 2</shortName>
        <ecNumber>3.2.1.15</ecNumber>
    </recommendedName>
    <alternativeName>
        <fullName>Pectinase 2</fullName>
    </alternativeName>
</protein>